<comment type="function">
    <text evidence="3 4">Involved in piecemeal microautophagy of the nucleus (micronucleophagy).</text>
</comment>
<comment type="subcellular location">
    <subcellularLocation>
        <location>Endosome membrane</location>
        <topology>Peripheral membrane protein</topology>
    </subcellularLocation>
    <subcellularLocation>
        <location>Prevacuolar compartment membrane</location>
        <topology>Peripheral membrane protein</topology>
    </subcellularLocation>
    <text>Recruitment to endosomes depends on binding to phosphatidylinositol 3-phosphate.</text>
</comment>
<comment type="domain">
    <text>Contains a beta-propeller domain involved in specific binding of phosphatidylinositol 3,5-bisphosphate.</text>
</comment>
<comment type="PTM">
    <text evidence="5">N-glycosylated.</text>
</comment>
<comment type="similarity">
    <text evidence="6">Belongs to the WD repeat PROPPIN family.</text>
</comment>
<proteinExistence type="evidence at protein level"/>
<evidence type="ECO:0000255" key="1"/>
<evidence type="ECO:0000256" key="2">
    <source>
        <dbReference type="SAM" id="MobiDB-lite"/>
    </source>
</evidence>
<evidence type="ECO:0000269" key="3">
    <source>
    </source>
</evidence>
<evidence type="ECO:0000269" key="4">
    <source>
    </source>
</evidence>
<evidence type="ECO:0000269" key="5">
    <source>
    </source>
</evidence>
<evidence type="ECO:0000305" key="6"/>
<keyword id="KW-0967">Endosome</keyword>
<keyword id="KW-0325">Glycoprotein</keyword>
<keyword id="KW-0472">Membrane</keyword>
<keyword id="KW-1185">Reference proteome</keyword>
<keyword id="KW-0677">Repeat</keyword>
<keyword id="KW-0853">WD repeat</keyword>
<gene>
    <name type="primary">HSV2</name>
    <name type="ordered locus">YGR223C</name>
    <name type="ORF">G8530</name>
</gene>
<sequence>MDVRRPIREAVNNRRKPKFLSVSFNQDDSCFSVALENGFRIFNTDPLTSKLSKTFKESATNQSRGTGIGYTRMLYRTNYIALVGGGKRPRHALNKLIIWDDLLQKETITLKFMSSIKDVFLSRIHIVVVLENTIEIFQFQTNPQRICPILDIPPNGSVDYVVCSSKHLQSQASQSQSKILEIIAFPSNKCVGQIQVADLSQIKYNSQNPKESALLPTSIIKAHKNPIKLVRLNRQGTMVATCSVQGTLIRIFSTHNGTLIKEFRRGVDKADIYEMSFSPNGSKLAVLSNKQTLHIFQIFETTNTETNTPDHSRANGSSHPLKNYIPKGLWRPKYLDSVWSICNAHLKNPIFDAHRNDNSGDVTHDNEFYKDRCRIGWCQDSNNREQDDSLVLVWQNSGIWEKFVILEKEQQDSSKTHYSLNESLRNEDTKSAGEPTRWELVRESWREL</sequence>
<accession>P50079</accession>
<accession>D6VV05</accession>
<reference key="1">
    <citation type="journal article" date="1996" name="Yeast">
        <title>Sequence analysis of the 43 kb CRM1-YLM9-PET54-DIE2-SMI1-PHO81-YHB4-PFK1 region from the right arm of Saccharomyces cerevisiae chromosome VII.</title>
        <authorList>
            <person name="van der Aart Q.J.M."/>
            <person name="Kleine K."/>
            <person name="Steensma H.Y."/>
        </authorList>
    </citation>
    <scope>NUCLEOTIDE SEQUENCE [GENOMIC DNA]</scope>
    <source>
        <strain>ATCC 204508 / S288c</strain>
    </source>
</reference>
<reference key="2">
    <citation type="journal article" date="1997" name="Nature">
        <title>The nucleotide sequence of Saccharomyces cerevisiae chromosome VII.</title>
        <authorList>
            <person name="Tettelin H."/>
            <person name="Agostoni-Carbone M.L."/>
            <person name="Albermann K."/>
            <person name="Albers M."/>
            <person name="Arroyo J."/>
            <person name="Backes U."/>
            <person name="Barreiros T."/>
            <person name="Bertani I."/>
            <person name="Bjourson A.J."/>
            <person name="Brueckner M."/>
            <person name="Bruschi C.V."/>
            <person name="Carignani G."/>
            <person name="Castagnoli L."/>
            <person name="Cerdan E."/>
            <person name="Clemente M.L."/>
            <person name="Coblenz A."/>
            <person name="Coglievina M."/>
            <person name="Coissac E."/>
            <person name="Defoor E."/>
            <person name="Del Bino S."/>
            <person name="Delius H."/>
            <person name="Delneri D."/>
            <person name="de Wergifosse P."/>
            <person name="Dujon B."/>
            <person name="Durand P."/>
            <person name="Entian K.-D."/>
            <person name="Eraso P."/>
            <person name="Escribano V."/>
            <person name="Fabiani L."/>
            <person name="Fartmann B."/>
            <person name="Feroli F."/>
            <person name="Feuermann M."/>
            <person name="Frontali L."/>
            <person name="Garcia-Gonzalez M."/>
            <person name="Garcia-Saez M.I."/>
            <person name="Goffeau A."/>
            <person name="Guerreiro P."/>
            <person name="Hani J."/>
            <person name="Hansen M."/>
            <person name="Hebling U."/>
            <person name="Hernandez K."/>
            <person name="Heumann K."/>
            <person name="Hilger F."/>
            <person name="Hofmann B."/>
            <person name="Indge K.J."/>
            <person name="James C.M."/>
            <person name="Klima R."/>
            <person name="Koetter P."/>
            <person name="Kramer B."/>
            <person name="Kramer W."/>
            <person name="Lauquin G."/>
            <person name="Leuther H."/>
            <person name="Louis E.J."/>
            <person name="Maillier E."/>
            <person name="Marconi A."/>
            <person name="Martegani E."/>
            <person name="Mazon M.J."/>
            <person name="Mazzoni C."/>
            <person name="McReynolds A.D.K."/>
            <person name="Melchioretto P."/>
            <person name="Mewes H.-W."/>
            <person name="Minenkova O."/>
            <person name="Mueller-Auer S."/>
            <person name="Nawrocki A."/>
            <person name="Netter P."/>
            <person name="Neu R."/>
            <person name="Nombela C."/>
            <person name="Oliver S.G."/>
            <person name="Panzeri L."/>
            <person name="Paoluzi S."/>
            <person name="Plevani P."/>
            <person name="Portetelle D."/>
            <person name="Portillo F."/>
            <person name="Potier S."/>
            <person name="Purnelle B."/>
            <person name="Rieger M."/>
            <person name="Riles L."/>
            <person name="Rinaldi T."/>
            <person name="Robben J."/>
            <person name="Rodrigues-Pousada C."/>
            <person name="Rodriguez-Belmonte E."/>
            <person name="Rodriguez-Torres A.M."/>
            <person name="Rose M."/>
            <person name="Ruzzi M."/>
            <person name="Saliola M."/>
            <person name="Sanchez-Perez M."/>
            <person name="Schaefer B."/>
            <person name="Schaefer M."/>
            <person name="Scharfe M."/>
            <person name="Schmidheini T."/>
            <person name="Schreer A."/>
            <person name="Skala J."/>
            <person name="Souciet J.-L."/>
            <person name="Steensma H.Y."/>
            <person name="Talla E."/>
            <person name="Thierry A."/>
            <person name="Vandenbol M."/>
            <person name="van der Aart Q.J.M."/>
            <person name="Van Dyck L."/>
            <person name="Vanoni M."/>
            <person name="Verhasselt P."/>
            <person name="Voet M."/>
            <person name="Volckaert G."/>
            <person name="Wambutt R."/>
            <person name="Watson M.D."/>
            <person name="Weber N."/>
            <person name="Wedler E."/>
            <person name="Wedler H."/>
            <person name="Wipfli P."/>
            <person name="Wolf K."/>
            <person name="Wright L.F."/>
            <person name="Zaccaria P."/>
            <person name="Zimmermann M."/>
            <person name="Zollner A."/>
            <person name="Kleine K."/>
        </authorList>
    </citation>
    <scope>NUCLEOTIDE SEQUENCE [LARGE SCALE GENOMIC DNA]</scope>
    <source>
        <strain>ATCC 204508 / S288c</strain>
    </source>
</reference>
<reference key="3">
    <citation type="journal article" date="2014" name="G3 (Bethesda)">
        <title>The reference genome sequence of Saccharomyces cerevisiae: Then and now.</title>
        <authorList>
            <person name="Engel S.R."/>
            <person name="Dietrich F.S."/>
            <person name="Fisk D.G."/>
            <person name="Binkley G."/>
            <person name="Balakrishnan R."/>
            <person name="Costanzo M.C."/>
            <person name="Dwight S.S."/>
            <person name="Hitz B.C."/>
            <person name="Karra K."/>
            <person name="Nash R.S."/>
            <person name="Weng S."/>
            <person name="Wong E.D."/>
            <person name="Lloyd P."/>
            <person name="Skrzypek M.S."/>
            <person name="Miyasato S.R."/>
            <person name="Simison M."/>
            <person name="Cherry J.M."/>
        </authorList>
    </citation>
    <scope>GENOME REANNOTATION</scope>
    <source>
        <strain>ATCC 204508 / S288c</strain>
    </source>
</reference>
<reference key="4">
    <citation type="journal article" date="2001" name="Yeast">
        <title>Functional analysis of the Saccharomyces cerevisiae YFR021w/YGR223c/YPL100w ORF family suggests relations to mitochondrial/peroxisomal functions and amino acid signalling pathways.</title>
        <authorList>
            <person name="Georgakopoulos T."/>
            <person name="Koutroubas G."/>
            <person name="Vakonakis I."/>
            <person name="Tzermia M."/>
            <person name="Prokova V."/>
            <person name="Voutsina A."/>
            <person name="Alexandraki D."/>
        </authorList>
    </citation>
    <scope>FUNCTION</scope>
</reference>
<reference key="5">
    <citation type="journal article" date="2004" name="EMBO J.">
        <title>Svp1p defines a family of phosphatidylinositol 3,5-bisphosphate effectors.</title>
        <authorList>
            <person name="Dove S.K."/>
            <person name="Piper R.C."/>
            <person name="McEwen R.K."/>
            <person name="Yu J.W."/>
            <person name="King M.C."/>
            <person name="Hughes D.C."/>
            <person name="Thuring J."/>
            <person name="Holmes A.B."/>
            <person name="Cooke F.T."/>
            <person name="Michell R.H."/>
            <person name="Parker P.J."/>
            <person name="Lemmon M.A."/>
        </authorList>
    </citation>
    <scope>INTERACTION WITH PIP2</scope>
    <scope>SUBCELLULAR LOCATION</scope>
</reference>
<reference key="6">
    <citation type="journal article" date="2008" name="Autophagy">
        <title>Dissecting the localization and function of Atg18, Atg21 and Ygr223c.</title>
        <authorList>
            <person name="Krick R."/>
            <person name="Henke S."/>
            <person name="Tolstrup J."/>
            <person name="Thumm M."/>
        </authorList>
    </citation>
    <scope>FUNCTION</scope>
    <scope>SUBCELLULAR LOCATION</scope>
</reference>
<reference key="7">
    <citation type="journal article" date="2009" name="Mol. Syst. Biol.">
        <title>Global analysis of the glycoproteome in Saccharomyces cerevisiae reveals new roles for protein glycosylation in eukaryotes.</title>
        <authorList>
            <person name="Kung L.A."/>
            <person name="Tao S.-C."/>
            <person name="Qian J."/>
            <person name="Smith M.G."/>
            <person name="Snyder M."/>
            <person name="Zhu H."/>
        </authorList>
    </citation>
    <scope>GLYCOSYLATION [LARGE SCALE ANALYSIS]</scope>
</reference>
<protein>
    <recommendedName>
        <fullName>SVP1-like protein 2</fullName>
    </recommendedName>
</protein>
<name>HSV2_YEAST</name>
<dbReference type="EMBL" id="X87941">
    <property type="protein sequence ID" value="CAA61171.1"/>
    <property type="molecule type" value="Genomic_DNA"/>
</dbReference>
<dbReference type="EMBL" id="Z73008">
    <property type="protein sequence ID" value="CAA97251.1"/>
    <property type="molecule type" value="Genomic_DNA"/>
</dbReference>
<dbReference type="EMBL" id="BK006941">
    <property type="protein sequence ID" value="DAA08316.1"/>
    <property type="molecule type" value="Genomic_DNA"/>
</dbReference>
<dbReference type="PIR" id="S57686">
    <property type="entry name" value="S57686"/>
</dbReference>
<dbReference type="RefSeq" id="NP_011739.1">
    <property type="nucleotide sequence ID" value="NM_001181352.1"/>
</dbReference>
<dbReference type="SMR" id="P50079"/>
<dbReference type="BioGRID" id="33476">
    <property type="interactions" value="116"/>
</dbReference>
<dbReference type="DIP" id="DIP-5556N"/>
<dbReference type="FunCoup" id="P50079">
    <property type="interactions" value="433"/>
</dbReference>
<dbReference type="IntAct" id="P50079">
    <property type="interactions" value="7"/>
</dbReference>
<dbReference type="MINT" id="P50079"/>
<dbReference type="STRING" id="4932.YGR223C"/>
<dbReference type="GlyCosmos" id="P50079">
    <property type="glycosylation" value="6 sites, No reported glycans"/>
</dbReference>
<dbReference type="GlyGen" id="P50079">
    <property type="glycosylation" value="6 sites"/>
</dbReference>
<dbReference type="iPTMnet" id="P50079"/>
<dbReference type="PaxDb" id="4932-YGR223C"/>
<dbReference type="PeptideAtlas" id="P50079"/>
<dbReference type="EnsemblFungi" id="YGR223C_mRNA">
    <property type="protein sequence ID" value="YGR223C"/>
    <property type="gene ID" value="YGR223C"/>
</dbReference>
<dbReference type="GeneID" id="853138"/>
<dbReference type="KEGG" id="sce:YGR223C"/>
<dbReference type="AGR" id="SGD:S000003455"/>
<dbReference type="SGD" id="S000003455">
    <property type="gene designation" value="HSV2"/>
</dbReference>
<dbReference type="VEuPathDB" id="FungiDB:YGR223C"/>
<dbReference type="eggNOG" id="KOG2111">
    <property type="taxonomic scope" value="Eukaryota"/>
</dbReference>
<dbReference type="GeneTree" id="ENSGT00940000157510"/>
<dbReference type="HOGENOM" id="CLU_025895_0_1_1"/>
<dbReference type="InParanoid" id="P50079"/>
<dbReference type="OMA" id="GGPQCMC"/>
<dbReference type="OrthoDB" id="1667587at2759"/>
<dbReference type="BioCyc" id="YEAST:G3O-30904-MONOMER"/>
<dbReference type="Reactome" id="R-SCE-1632852">
    <property type="pathway name" value="Macroautophagy"/>
</dbReference>
<dbReference type="BioGRID-ORCS" id="853138">
    <property type="hits" value="0 hits in 10 CRISPR screens"/>
</dbReference>
<dbReference type="PRO" id="PR:P50079"/>
<dbReference type="Proteomes" id="UP000002311">
    <property type="component" value="Chromosome VII"/>
</dbReference>
<dbReference type="RNAct" id="P50079">
    <property type="molecule type" value="protein"/>
</dbReference>
<dbReference type="GO" id="GO:0005737">
    <property type="term" value="C:cytoplasm"/>
    <property type="evidence" value="ECO:0000314"/>
    <property type="project" value="SGD"/>
</dbReference>
<dbReference type="GO" id="GO:0005829">
    <property type="term" value="C:cytosol"/>
    <property type="evidence" value="ECO:0000318"/>
    <property type="project" value="GO_Central"/>
</dbReference>
<dbReference type="GO" id="GO:0005768">
    <property type="term" value="C:endosome"/>
    <property type="evidence" value="ECO:0000314"/>
    <property type="project" value="SGD"/>
</dbReference>
<dbReference type="GO" id="GO:0010008">
    <property type="term" value="C:endosome membrane"/>
    <property type="evidence" value="ECO:0007669"/>
    <property type="project" value="UniProtKB-SubCell"/>
</dbReference>
<dbReference type="GO" id="GO:0000324">
    <property type="term" value="C:fungal-type vacuole"/>
    <property type="evidence" value="ECO:0000314"/>
    <property type="project" value="SGD"/>
</dbReference>
<dbReference type="GO" id="GO:0000329">
    <property type="term" value="C:fungal-type vacuole membrane"/>
    <property type="evidence" value="ECO:0007005"/>
    <property type="project" value="SGD"/>
</dbReference>
<dbReference type="GO" id="GO:0034045">
    <property type="term" value="C:phagophore assembly site membrane"/>
    <property type="evidence" value="ECO:0000318"/>
    <property type="project" value="GO_Central"/>
</dbReference>
<dbReference type="GO" id="GO:0080025">
    <property type="term" value="F:phosphatidylinositol-3,5-bisphosphate binding"/>
    <property type="evidence" value="ECO:0000314"/>
    <property type="project" value="SGD"/>
</dbReference>
<dbReference type="GO" id="GO:0032266">
    <property type="term" value="F:phosphatidylinositol-3-phosphate binding"/>
    <property type="evidence" value="ECO:0000314"/>
    <property type="project" value="SGD"/>
</dbReference>
<dbReference type="GO" id="GO:0070273">
    <property type="term" value="F:phosphatidylinositol-4-phosphate binding"/>
    <property type="evidence" value="ECO:0000314"/>
    <property type="project" value="SGD"/>
</dbReference>
<dbReference type="GO" id="GO:0010314">
    <property type="term" value="F:phosphatidylinositol-5-phosphate binding"/>
    <property type="evidence" value="ECO:0000314"/>
    <property type="project" value="SGD"/>
</dbReference>
<dbReference type="GO" id="GO:0030674">
    <property type="term" value="F:protein-macromolecule adaptor activity"/>
    <property type="evidence" value="ECO:0000318"/>
    <property type="project" value="GO_Central"/>
</dbReference>
<dbReference type="GO" id="GO:0000422">
    <property type="term" value="P:autophagy of mitochondrion"/>
    <property type="evidence" value="ECO:0000318"/>
    <property type="project" value="GO_Central"/>
</dbReference>
<dbReference type="GO" id="GO:0061723">
    <property type="term" value="P:glycophagy"/>
    <property type="evidence" value="ECO:0000318"/>
    <property type="project" value="GO_Central"/>
</dbReference>
<dbReference type="GO" id="GO:0044804">
    <property type="term" value="P:nucleophagy"/>
    <property type="evidence" value="ECO:0000318"/>
    <property type="project" value="GO_Central"/>
</dbReference>
<dbReference type="GO" id="GO:0000425">
    <property type="term" value="P:pexophagy"/>
    <property type="evidence" value="ECO:0000318"/>
    <property type="project" value="GO_Central"/>
</dbReference>
<dbReference type="GO" id="GO:0034727">
    <property type="term" value="P:piecemeal microautophagy of the nucleus"/>
    <property type="evidence" value="ECO:0000315"/>
    <property type="project" value="SGD"/>
</dbReference>
<dbReference type="GO" id="GO:0034497">
    <property type="term" value="P:protein localization to phagophore assembly site"/>
    <property type="evidence" value="ECO:0000318"/>
    <property type="project" value="GO_Central"/>
</dbReference>
<dbReference type="FunFam" id="2.130.10.10:FF:000966">
    <property type="entry name" value="Hsv2p"/>
    <property type="match status" value="1"/>
</dbReference>
<dbReference type="Gene3D" id="2.130.10.10">
    <property type="entry name" value="YVTN repeat-like/Quinoprotein amine dehydrogenase"/>
    <property type="match status" value="1"/>
</dbReference>
<dbReference type="InterPro" id="IPR048720">
    <property type="entry name" value="PROPPIN"/>
</dbReference>
<dbReference type="InterPro" id="IPR015943">
    <property type="entry name" value="WD40/YVTN_repeat-like_dom_sf"/>
</dbReference>
<dbReference type="InterPro" id="IPR036322">
    <property type="entry name" value="WD40_repeat_dom_sf"/>
</dbReference>
<dbReference type="InterPro" id="IPR001680">
    <property type="entry name" value="WD40_rpt"/>
</dbReference>
<dbReference type="PANTHER" id="PTHR11227">
    <property type="entry name" value="WD-REPEAT PROTEIN INTERACTING WITH PHOSPHOINOSIDES WIPI -RELATED"/>
    <property type="match status" value="1"/>
</dbReference>
<dbReference type="Pfam" id="PF21032">
    <property type="entry name" value="PROPPIN"/>
    <property type="match status" value="1"/>
</dbReference>
<dbReference type="SMART" id="SM00320">
    <property type="entry name" value="WD40"/>
    <property type="match status" value="2"/>
</dbReference>
<dbReference type="SUPFAM" id="SSF50978">
    <property type="entry name" value="WD40 repeat-like"/>
    <property type="match status" value="1"/>
</dbReference>
<organism>
    <name type="scientific">Saccharomyces cerevisiae (strain ATCC 204508 / S288c)</name>
    <name type="common">Baker's yeast</name>
    <dbReference type="NCBI Taxonomy" id="559292"/>
    <lineage>
        <taxon>Eukaryota</taxon>
        <taxon>Fungi</taxon>
        <taxon>Dikarya</taxon>
        <taxon>Ascomycota</taxon>
        <taxon>Saccharomycotina</taxon>
        <taxon>Saccharomycetes</taxon>
        <taxon>Saccharomycetales</taxon>
        <taxon>Saccharomycetaceae</taxon>
        <taxon>Saccharomyces</taxon>
    </lineage>
</organism>
<feature type="chain" id="PRO_0000051034" description="SVP1-like protein 2">
    <location>
        <begin position="1"/>
        <end position="448"/>
    </location>
</feature>
<feature type="repeat" description="WD 1">
    <location>
        <begin position="222"/>
        <end position="262"/>
    </location>
</feature>
<feature type="repeat" description="WD 2">
    <location>
        <begin position="267"/>
        <end position="306"/>
    </location>
</feature>
<feature type="region of interest" description="Disordered" evidence="2">
    <location>
        <begin position="416"/>
        <end position="435"/>
    </location>
</feature>
<feature type="compositionally biased region" description="Basic and acidic residues" evidence="2">
    <location>
        <begin position="424"/>
        <end position="435"/>
    </location>
</feature>
<feature type="glycosylation site" description="N-linked (GlcNAc...) asparagine" evidence="1">
    <location>
        <position position="61"/>
    </location>
</feature>
<feature type="glycosylation site" description="N-linked (GlcNAc...) asparagine" evidence="1">
    <location>
        <position position="155"/>
    </location>
</feature>
<feature type="glycosylation site" description="N-linked (GlcNAc...) asparagine" evidence="1">
    <location>
        <position position="256"/>
    </location>
</feature>
<feature type="glycosylation site" description="N-linked (GlcNAc...) asparagine" evidence="1">
    <location>
        <position position="280"/>
    </location>
</feature>
<feature type="glycosylation site" description="N-linked (GlcNAc...) asparagine" evidence="1">
    <location>
        <position position="315"/>
    </location>
</feature>
<feature type="glycosylation site" description="N-linked (GlcNAc...) asparagine" evidence="1">
    <location>
        <position position="421"/>
    </location>
</feature>